<accession>Q9ZKT1</accession>
<comment type="subcellular location">
    <subcellularLocation>
        <location evidence="2">Cell membrane</location>
        <topology evidence="2">Multi-pass membrane protein</topology>
    </subcellularLocation>
</comment>
<comment type="similarity">
    <text evidence="2">Belongs to the BI1 family.</text>
</comment>
<name>Y920_HELPJ</name>
<protein>
    <recommendedName>
        <fullName>Uncharacterized protein jhp_0854</fullName>
    </recommendedName>
</protein>
<gene>
    <name type="ordered locus">jhp_0854</name>
</gene>
<evidence type="ECO:0000255" key="1"/>
<evidence type="ECO:0000305" key="2"/>
<organism>
    <name type="scientific">Helicobacter pylori (strain J99 / ATCC 700824)</name>
    <name type="common">Campylobacter pylori J99</name>
    <dbReference type="NCBI Taxonomy" id="85963"/>
    <lineage>
        <taxon>Bacteria</taxon>
        <taxon>Pseudomonadati</taxon>
        <taxon>Campylobacterota</taxon>
        <taxon>Epsilonproteobacteria</taxon>
        <taxon>Campylobacterales</taxon>
        <taxon>Helicobacteraceae</taxon>
        <taxon>Helicobacter</taxon>
    </lineage>
</organism>
<proteinExistence type="inferred from homology"/>
<sequence length="230" mass="25135">MALYDRANSRNAYAEDSVLHESELVSFVKTTYKFFAGSLLLATVGALLGLMNFQAVVQYKWVFFIAEIVAFFGLMFSKSKPGLNLFMLFAFTSLSGVTLVPLLGMVIAKAGLGAVWQALGMTTIVFGLMSVYALKTKNDLANMGKMLFIALIVVVVCSLINLFLGSPMFQVVIAGASAILFSLYIAYDTQNIVKGMYDSPIDAAVSLYLDFLNVFISILQIIGIFSDRDK</sequence>
<feature type="chain" id="PRO_0000179106" description="Uncharacterized protein jhp_0854">
    <location>
        <begin position="1"/>
        <end position="230"/>
    </location>
</feature>
<feature type="transmembrane region" description="Helical" evidence="1">
    <location>
        <begin position="34"/>
        <end position="54"/>
    </location>
</feature>
<feature type="transmembrane region" description="Helical" evidence="1">
    <location>
        <begin position="56"/>
        <end position="76"/>
    </location>
</feature>
<feature type="transmembrane region" description="Helical" evidence="1">
    <location>
        <begin position="87"/>
        <end position="107"/>
    </location>
</feature>
<feature type="transmembrane region" description="Helical" evidence="1">
    <location>
        <begin position="111"/>
        <end position="131"/>
    </location>
</feature>
<feature type="transmembrane region" description="Helical" evidence="1">
    <location>
        <begin position="146"/>
        <end position="166"/>
    </location>
</feature>
<feature type="transmembrane region" description="Helical" evidence="1">
    <location>
        <begin position="167"/>
        <end position="187"/>
    </location>
</feature>
<feature type="transmembrane region" description="Helical" evidence="1">
    <location>
        <begin position="205"/>
        <end position="225"/>
    </location>
</feature>
<dbReference type="EMBL" id="AE001439">
    <property type="protein sequence ID" value="AAD06435.1"/>
    <property type="molecule type" value="Genomic_DNA"/>
</dbReference>
<dbReference type="PIR" id="F71879">
    <property type="entry name" value="F71879"/>
</dbReference>
<dbReference type="RefSeq" id="WP_001240296.1">
    <property type="nucleotide sequence ID" value="NZ_CP011330.1"/>
</dbReference>
<dbReference type="SMR" id="Q9ZKT1"/>
<dbReference type="KEGG" id="hpj:jhp_0854"/>
<dbReference type="PATRIC" id="fig|85963.30.peg.110"/>
<dbReference type="eggNOG" id="COG0670">
    <property type="taxonomic scope" value="Bacteria"/>
</dbReference>
<dbReference type="Proteomes" id="UP000000804">
    <property type="component" value="Chromosome"/>
</dbReference>
<dbReference type="GO" id="GO:0005886">
    <property type="term" value="C:plasma membrane"/>
    <property type="evidence" value="ECO:0007669"/>
    <property type="project" value="UniProtKB-SubCell"/>
</dbReference>
<dbReference type="CDD" id="cd10432">
    <property type="entry name" value="BI-1-like_bacterial"/>
    <property type="match status" value="1"/>
</dbReference>
<dbReference type="InterPro" id="IPR006214">
    <property type="entry name" value="Bax_inhibitor_1-related"/>
</dbReference>
<dbReference type="PANTHER" id="PTHR23291">
    <property type="entry name" value="BAX INHIBITOR-RELATED"/>
    <property type="match status" value="1"/>
</dbReference>
<dbReference type="PANTHER" id="PTHR23291:SF115">
    <property type="entry name" value="MODULATOR OF FTSH PROTEASE YCCA"/>
    <property type="match status" value="1"/>
</dbReference>
<dbReference type="Pfam" id="PF01027">
    <property type="entry name" value="Bax1-I"/>
    <property type="match status" value="1"/>
</dbReference>
<keyword id="KW-1003">Cell membrane</keyword>
<keyword id="KW-0472">Membrane</keyword>
<keyword id="KW-0812">Transmembrane</keyword>
<keyword id="KW-1133">Transmembrane helix</keyword>
<reference key="1">
    <citation type="journal article" date="1999" name="Nature">
        <title>Genomic sequence comparison of two unrelated isolates of the human gastric pathogen Helicobacter pylori.</title>
        <authorList>
            <person name="Alm R.A."/>
            <person name="Ling L.-S.L."/>
            <person name="Moir D.T."/>
            <person name="King B.L."/>
            <person name="Brown E.D."/>
            <person name="Doig P.C."/>
            <person name="Smith D.R."/>
            <person name="Noonan B."/>
            <person name="Guild B.C."/>
            <person name="deJonge B.L."/>
            <person name="Carmel G."/>
            <person name="Tummino P.J."/>
            <person name="Caruso A."/>
            <person name="Uria-Nickelsen M."/>
            <person name="Mills D.M."/>
            <person name="Ives C."/>
            <person name="Gibson R."/>
            <person name="Merberg D."/>
            <person name="Mills S.D."/>
            <person name="Jiang Q."/>
            <person name="Taylor D.E."/>
            <person name="Vovis G.F."/>
            <person name="Trust T.J."/>
        </authorList>
    </citation>
    <scope>NUCLEOTIDE SEQUENCE [LARGE SCALE GENOMIC DNA]</scope>
    <source>
        <strain>J99 / ATCC 700824</strain>
    </source>
</reference>